<feature type="chain" id="PRO_0000278623" description="Meiotically up-regulated gene 126 protein">
    <location>
        <begin position="1"/>
        <end position="398"/>
    </location>
</feature>
<feature type="transmembrane region" description="Helical" evidence="1">
    <location>
        <begin position="269"/>
        <end position="289"/>
    </location>
</feature>
<feature type="transmembrane region" description="Helical" evidence="1">
    <location>
        <begin position="305"/>
        <end position="325"/>
    </location>
</feature>
<feature type="transmembrane region" description="Helical" evidence="1">
    <location>
        <begin position="341"/>
        <end position="361"/>
    </location>
</feature>
<feature type="transmembrane region" description="Helical" evidence="1">
    <location>
        <begin position="373"/>
        <end position="393"/>
    </location>
</feature>
<feature type="region of interest" description="Disordered" evidence="2">
    <location>
        <begin position="30"/>
        <end position="81"/>
    </location>
</feature>
<feature type="region of interest" description="Disordered" evidence="2">
    <location>
        <begin position="119"/>
        <end position="260"/>
    </location>
</feature>
<feature type="compositionally biased region" description="Polar residues" evidence="2">
    <location>
        <begin position="119"/>
        <end position="135"/>
    </location>
</feature>
<feature type="compositionally biased region" description="Polar residues" evidence="2">
    <location>
        <begin position="183"/>
        <end position="199"/>
    </location>
</feature>
<feature type="compositionally biased region" description="Low complexity" evidence="2">
    <location>
        <begin position="210"/>
        <end position="222"/>
    </location>
</feature>
<feature type="compositionally biased region" description="Basic and acidic residues" evidence="2">
    <location>
        <begin position="224"/>
        <end position="236"/>
    </location>
</feature>
<feature type="compositionally biased region" description="Polar residues" evidence="2">
    <location>
        <begin position="248"/>
        <end position="260"/>
    </location>
</feature>
<keyword id="KW-0469">Meiosis</keyword>
<keyword id="KW-0472">Membrane</keyword>
<keyword id="KW-1185">Reference proteome</keyword>
<keyword id="KW-0812">Transmembrane</keyword>
<keyword id="KW-1133">Transmembrane helix</keyword>
<protein>
    <recommendedName>
        <fullName>Meiotically up-regulated gene 126 protein</fullName>
    </recommendedName>
</protein>
<gene>
    <name type="primary">mug126</name>
    <name type="ORF">SPAC4F10.08</name>
</gene>
<organism>
    <name type="scientific">Schizosaccharomyces pombe (strain 972 / ATCC 24843)</name>
    <name type="common">Fission yeast</name>
    <dbReference type="NCBI Taxonomy" id="284812"/>
    <lineage>
        <taxon>Eukaryota</taxon>
        <taxon>Fungi</taxon>
        <taxon>Dikarya</taxon>
        <taxon>Ascomycota</taxon>
        <taxon>Taphrinomycotina</taxon>
        <taxon>Schizosaccharomycetes</taxon>
        <taxon>Schizosaccharomycetales</taxon>
        <taxon>Schizosaccharomycetaceae</taxon>
        <taxon>Schizosaccharomyces</taxon>
    </lineage>
</organism>
<dbReference type="EMBL" id="CU329670">
    <property type="protein sequence ID" value="CAB11711.2"/>
    <property type="molecule type" value="Genomic_DNA"/>
</dbReference>
<dbReference type="PIR" id="T38812">
    <property type="entry name" value="T38812"/>
</dbReference>
<dbReference type="RefSeq" id="NP_594751.2">
    <property type="nucleotide sequence ID" value="NM_001020178.3"/>
</dbReference>
<dbReference type="SMR" id="O36020"/>
<dbReference type="BioGRID" id="279937">
    <property type="interactions" value="2"/>
</dbReference>
<dbReference type="STRING" id="284812.O36020"/>
<dbReference type="PaxDb" id="4896-SPAC4F10.08.1"/>
<dbReference type="EnsemblFungi" id="SPAC4F10.08.1">
    <property type="protein sequence ID" value="SPAC4F10.08.1:pep"/>
    <property type="gene ID" value="SPAC4F10.08"/>
</dbReference>
<dbReference type="PomBase" id="SPAC4F10.08">
    <property type="gene designation" value="mug126"/>
</dbReference>
<dbReference type="VEuPathDB" id="FungiDB:SPAC4F10.08"/>
<dbReference type="HOGENOM" id="CLU_692907_0_0_1"/>
<dbReference type="InParanoid" id="O36020"/>
<dbReference type="PRO" id="PR:O36020"/>
<dbReference type="Proteomes" id="UP000002485">
    <property type="component" value="Chromosome I"/>
</dbReference>
<dbReference type="GO" id="GO:0016020">
    <property type="term" value="C:membrane"/>
    <property type="evidence" value="ECO:0007669"/>
    <property type="project" value="UniProtKB-SubCell"/>
</dbReference>
<dbReference type="GO" id="GO:0051321">
    <property type="term" value="P:meiotic cell cycle"/>
    <property type="evidence" value="ECO:0007669"/>
    <property type="project" value="UniProtKB-KW"/>
</dbReference>
<evidence type="ECO:0000255" key="1"/>
<evidence type="ECO:0000256" key="2">
    <source>
        <dbReference type="SAM" id="MobiDB-lite"/>
    </source>
</evidence>
<evidence type="ECO:0000269" key="3">
    <source>
    </source>
</evidence>
<evidence type="ECO:0000305" key="4"/>
<proteinExistence type="evidence at protein level"/>
<reference key="1">
    <citation type="journal article" date="2002" name="Nature">
        <title>The genome sequence of Schizosaccharomyces pombe.</title>
        <authorList>
            <person name="Wood V."/>
            <person name="Gwilliam R."/>
            <person name="Rajandream M.A."/>
            <person name="Lyne M.H."/>
            <person name="Lyne R."/>
            <person name="Stewart A."/>
            <person name="Sgouros J.G."/>
            <person name="Peat N."/>
            <person name="Hayles J."/>
            <person name="Baker S.G."/>
            <person name="Basham D."/>
            <person name="Bowman S."/>
            <person name="Brooks K."/>
            <person name="Brown D."/>
            <person name="Brown S."/>
            <person name="Chillingworth T."/>
            <person name="Churcher C.M."/>
            <person name="Collins M."/>
            <person name="Connor R."/>
            <person name="Cronin A."/>
            <person name="Davis P."/>
            <person name="Feltwell T."/>
            <person name="Fraser A."/>
            <person name="Gentles S."/>
            <person name="Goble A."/>
            <person name="Hamlin N."/>
            <person name="Harris D.E."/>
            <person name="Hidalgo J."/>
            <person name="Hodgson G."/>
            <person name="Holroyd S."/>
            <person name="Hornsby T."/>
            <person name="Howarth S."/>
            <person name="Huckle E.J."/>
            <person name="Hunt S."/>
            <person name="Jagels K."/>
            <person name="James K.D."/>
            <person name="Jones L."/>
            <person name="Jones M."/>
            <person name="Leather S."/>
            <person name="McDonald S."/>
            <person name="McLean J."/>
            <person name="Mooney P."/>
            <person name="Moule S."/>
            <person name="Mungall K.L."/>
            <person name="Murphy L.D."/>
            <person name="Niblett D."/>
            <person name="Odell C."/>
            <person name="Oliver K."/>
            <person name="O'Neil S."/>
            <person name="Pearson D."/>
            <person name="Quail M.A."/>
            <person name="Rabbinowitsch E."/>
            <person name="Rutherford K.M."/>
            <person name="Rutter S."/>
            <person name="Saunders D."/>
            <person name="Seeger K."/>
            <person name="Sharp S."/>
            <person name="Skelton J."/>
            <person name="Simmonds M.N."/>
            <person name="Squares R."/>
            <person name="Squares S."/>
            <person name="Stevens K."/>
            <person name="Taylor K."/>
            <person name="Taylor R.G."/>
            <person name="Tivey A."/>
            <person name="Walsh S.V."/>
            <person name="Warren T."/>
            <person name="Whitehead S."/>
            <person name="Woodward J.R."/>
            <person name="Volckaert G."/>
            <person name="Aert R."/>
            <person name="Robben J."/>
            <person name="Grymonprez B."/>
            <person name="Weltjens I."/>
            <person name="Vanstreels E."/>
            <person name="Rieger M."/>
            <person name="Schaefer M."/>
            <person name="Mueller-Auer S."/>
            <person name="Gabel C."/>
            <person name="Fuchs M."/>
            <person name="Duesterhoeft A."/>
            <person name="Fritzc C."/>
            <person name="Holzer E."/>
            <person name="Moestl D."/>
            <person name="Hilbert H."/>
            <person name="Borzym K."/>
            <person name="Langer I."/>
            <person name="Beck A."/>
            <person name="Lehrach H."/>
            <person name="Reinhardt R."/>
            <person name="Pohl T.M."/>
            <person name="Eger P."/>
            <person name="Zimmermann W."/>
            <person name="Wedler H."/>
            <person name="Wambutt R."/>
            <person name="Purnelle B."/>
            <person name="Goffeau A."/>
            <person name="Cadieu E."/>
            <person name="Dreano S."/>
            <person name="Gloux S."/>
            <person name="Lelaure V."/>
            <person name="Mottier S."/>
            <person name="Galibert F."/>
            <person name="Aves S.J."/>
            <person name="Xiang Z."/>
            <person name="Hunt C."/>
            <person name="Moore K."/>
            <person name="Hurst S.M."/>
            <person name="Lucas M."/>
            <person name="Rochet M."/>
            <person name="Gaillardin C."/>
            <person name="Tallada V.A."/>
            <person name="Garzon A."/>
            <person name="Thode G."/>
            <person name="Daga R.R."/>
            <person name="Cruzado L."/>
            <person name="Jimenez J."/>
            <person name="Sanchez M."/>
            <person name="del Rey F."/>
            <person name="Benito J."/>
            <person name="Dominguez A."/>
            <person name="Revuelta J.L."/>
            <person name="Moreno S."/>
            <person name="Armstrong J."/>
            <person name="Forsburg S.L."/>
            <person name="Cerutti L."/>
            <person name="Lowe T."/>
            <person name="McCombie W.R."/>
            <person name="Paulsen I."/>
            <person name="Potashkin J."/>
            <person name="Shpakovski G.V."/>
            <person name="Ussery D."/>
            <person name="Barrell B.G."/>
            <person name="Nurse P."/>
        </authorList>
    </citation>
    <scope>NUCLEOTIDE SEQUENCE [LARGE SCALE GENOMIC DNA]</scope>
    <source>
        <strain>972 / ATCC 24843</strain>
    </source>
</reference>
<reference key="2">
    <citation type="journal article" date="2005" name="Curr. Biol.">
        <title>A large-scale screen in S. pombe identifies seven novel genes required for critical meiotic events.</title>
        <authorList>
            <person name="Martin-Castellanos C."/>
            <person name="Blanco M."/>
            <person name="Rozalen A.E."/>
            <person name="Perez-Hidalgo L."/>
            <person name="Garcia A.I."/>
            <person name="Conde F."/>
            <person name="Mata J."/>
            <person name="Ellermeier C."/>
            <person name="Davis L."/>
            <person name="San-Segundo P."/>
            <person name="Smith G.R."/>
            <person name="Moreno S."/>
        </authorList>
    </citation>
    <scope>FUNCTION IN MEIOSIS</scope>
</reference>
<name>MU126_SCHPO</name>
<sequence>MGEMLNENTSSTSLSSFYVLENETIFNVQEEMEEDGSESGNIQKTLLEDPCPENVNDENEDEQNRSSRSSSPLVKHEQRHRMYNLKEVIKSFILTKSKEKPCDLEMGIDSIEMGRMQSFESDQQESHTGQANFPTDQEDPRNPQLDSQYEAFITQGESQTDKKKTSTVQEEELQNAGKKLETVQENPQAYSKVTQQEPQAGQKAVPQEPQANQQETSSNQEESSFDRQETQDDKQKPKTTQQEHYNLRNRNQATITNSNSKPQTRRSKIFVISLLGYGVYLLAFLDLIEYVSKEYGFEATVSAQIFLWCLFGVLMIARGLIYLALFRNFLNILKRMAIYCGACFWVYACIFFLTRVFCFLIDTPYPQFEKIPLEIYSIFAAINVYIIELGAIYCTSGR</sequence>
<comment type="function">
    <text evidence="3">Has a role in meiosis.</text>
</comment>
<comment type="subcellular location">
    <subcellularLocation>
        <location evidence="4">Membrane</location>
        <topology evidence="4">Multi-pass membrane protein</topology>
    </subcellularLocation>
</comment>
<accession>O36020</accession>